<protein>
    <recommendedName>
        <fullName>Cysteine-rich receptor-like protein kinase 38</fullName>
        <shortName>Cysteine-rich RLK38</shortName>
        <ecNumber>2.7.11.-</ecNumber>
    </recommendedName>
</protein>
<reference key="1">
    <citation type="journal article" date="1999" name="Nature">
        <title>Sequence and analysis of chromosome 4 of the plant Arabidopsis thaliana.</title>
        <authorList>
            <person name="Mayer K.F.X."/>
            <person name="Schueller C."/>
            <person name="Wambutt R."/>
            <person name="Murphy G."/>
            <person name="Volckaert G."/>
            <person name="Pohl T."/>
            <person name="Duesterhoeft A."/>
            <person name="Stiekema W."/>
            <person name="Entian K.-D."/>
            <person name="Terryn N."/>
            <person name="Harris B."/>
            <person name="Ansorge W."/>
            <person name="Brandt P."/>
            <person name="Grivell L.A."/>
            <person name="Rieger M."/>
            <person name="Weichselgartner M."/>
            <person name="de Simone V."/>
            <person name="Obermaier B."/>
            <person name="Mache R."/>
            <person name="Mueller M."/>
            <person name="Kreis M."/>
            <person name="Delseny M."/>
            <person name="Puigdomenech P."/>
            <person name="Watson M."/>
            <person name="Schmidtheini T."/>
            <person name="Reichert B."/>
            <person name="Portetelle D."/>
            <person name="Perez-Alonso M."/>
            <person name="Boutry M."/>
            <person name="Bancroft I."/>
            <person name="Vos P."/>
            <person name="Hoheisel J."/>
            <person name="Zimmermann W."/>
            <person name="Wedler H."/>
            <person name="Ridley P."/>
            <person name="Langham S.-A."/>
            <person name="McCullagh B."/>
            <person name="Bilham L."/>
            <person name="Robben J."/>
            <person name="van der Schueren J."/>
            <person name="Grymonprez B."/>
            <person name="Chuang Y.-J."/>
            <person name="Vandenbussche F."/>
            <person name="Braeken M."/>
            <person name="Weltjens I."/>
            <person name="Voet M."/>
            <person name="Bastiaens I."/>
            <person name="Aert R."/>
            <person name="Defoor E."/>
            <person name="Weitzenegger T."/>
            <person name="Bothe G."/>
            <person name="Ramsperger U."/>
            <person name="Hilbert H."/>
            <person name="Braun M."/>
            <person name="Holzer E."/>
            <person name="Brandt A."/>
            <person name="Peters S."/>
            <person name="van Staveren M."/>
            <person name="Dirkse W."/>
            <person name="Mooijman P."/>
            <person name="Klein Lankhorst R."/>
            <person name="Rose M."/>
            <person name="Hauf J."/>
            <person name="Koetter P."/>
            <person name="Berneiser S."/>
            <person name="Hempel S."/>
            <person name="Feldpausch M."/>
            <person name="Lamberth S."/>
            <person name="Van den Daele H."/>
            <person name="De Keyser A."/>
            <person name="Buysshaert C."/>
            <person name="Gielen J."/>
            <person name="Villarroel R."/>
            <person name="De Clercq R."/>
            <person name="van Montagu M."/>
            <person name="Rogers J."/>
            <person name="Cronin A."/>
            <person name="Quail M.A."/>
            <person name="Bray-Allen S."/>
            <person name="Clark L."/>
            <person name="Doggett J."/>
            <person name="Hall S."/>
            <person name="Kay M."/>
            <person name="Lennard N."/>
            <person name="McLay K."/>
            <person name="Mayes R."/>
            <person name="Pettett A."/>
            <person name="Rajandream M.A."/>
            <person name="Lyne M."/>
            <person name="Benes V."/>
            <person name="Rechmann S."/>
            <person name="Borkova D."/>
            <person name="Bloecker H."/>
            <person name="Scharfe M."/>
            <person name="Grimm M."/>
            <person name="Loehnert T.-H."/>
            <person name="Dose S."/>
            <person name="de Haan M."/>
            <person name="Maarse A.C."/>
            <person name="Schaefer M."/>
            <person name="Mueller-Auer S."/>
            <person name="Gabel C."/>
            <person name="Fuchs M."/>
            <person name="Fartmann B."/>
            <person name="Granderath K."/>
            <person name="Dauner D."/>
            <person name="Herzl A."/>
            <person name="Neumann S."/>
            <person name="Argiriou A."/>
            <person name="Vitale D."/>
            <person name="Liguori R."/>
            <person name="Piravandi E."/>
            <person name="Massenet O."/>
            <person name="Quigley F."/>
            <person name="Clabauld G."/>
            <person name="Muendlein A."/>
            <person name="Felber R."/>
            <person name="Schnabl S."/>
            <person name="Hiller R."/>
            <person name="Schmidt W."/>
            <person name="Lecharny A."/>
            <person name="Aubourg S."/>
            <person name="Chefdor F."/>
            <person name="Cooke R."/>
            <person name="Berger C."/>
            <person name="Monfort A."/>
            <person name="Casacuberta E."/>
            <person name="Gibbons T."/>
            <person name="Weber N."/>
            <person name="Vandenbol M."/>
            <person name="Bargues M."/>
            <person name="Terol J."/>
            <person name="Torres A."/>
            <person name="Perez-Perez A."/>
            <person name="Purnelle B."/>
            <person name="Bent E."/>
            <person name="Johnson S."/>
            <person name="Tacon D."/>
            <person name="Jesse T."/>
            <person name="Heijnen L."/>
            <person name="Schwarz S."/>
            <person name="Scholler P."/>
            <person name="Heber S."/>
            <person name="Francs P."/>
            <person name="Bielke C."/>
            <person name="Frishman D."/>
            <person name="Haase D."/>
            <person name="Lemcke K."/>
            <person name="Mewes H.-W."/>
            <person name="Stocker S."/>
            <person name="Zaccaria P."/>
            <person name="Bevan M."/>
            <person name="Wilson R.K."/>
            <person name="de la Bastide M."/>
            <person name="Habermann K."/>
            <person name="Parnell L."/>
            <person name="Dedhia N."/>
            <person name="Gnoj L."/>
            <person name="Schutz K."/>
            <person name="Huang E."/>
            <person name="Spiegel L."/>
            <person name="Sekhon M."/>
            <person name="Murray J."/>
            <person name="Sheet P."/>
            <person name="Cordes M."/>
            <person name="Abu-Threideh J."/>
            <person name="Stoneking T."/>
            <person name="Kalicki J."/>
            <person name="Graves T."/>
            <person name="Harmon G."/>
            <person name="Edwards J."/>
            <person name="Latreille P."/>
            <person name="Courtney L."/>
            <person name="Cloud J."/>
            <person name="Abbott A."/>
            <person name="Scott K."/>
            <person name="Johnson D."/>
            <person name="Minx P."/>
            <person name="Bentley D."/>
            <person name="Fulton B."/>
            <person name="Miller N."/>
            <person name="Greco T."/>
            <person name="Kemp K."/>
            <person name="Kramer J."/>
            <person name="Fulton L."/>
            <person name="Mardis E."/>
            <person name="Dante M."/>
            <person name="Pepin K."/>
            <person name="Hillier L.W."/>
            <person name="Nelson J."/>
            <person name="Spieth J."/>
            <person name="Ryan E."/>
            <person name="Andrews S."/>
            <person name="Geisel C."/>
            <person name="Layman D."/>
            <person name="Du H."/>
            <person name="Ali J."/>
            <person name="Berghoff A."/>
            <person name="Jones K."/>
            <person name="Drone K."/>
            <person name="Cotton M."/>
            <person name="Joshu C."/>
            <person name="Antonoiu B."/>
            <person name="Zidanic M."/>
            <person name="Strong C."/>
            <person name="Sun H."/>
            <person name="Lamar B."/>
            <person name="Yordan C."/>
            <person name="Ma P."/>
            <person name="Zhong J."/>
            <person name="Preston R."/>
            <person name="Vil D."/>
            <person name="Shekher M."/>
            <person name="Matero A."/>
            <person name="Shah R."/>
            <person name="Swaby I.K."/>
            <person name="O'Shaughnessy A."/>
            <person name="Rodriguez M."/>
            <person name="Hoffman J."/>
            <person name="Till S."/>
            <person name="Granat S."/>
            <person name="Shohdy N."/>
            <person name="Hasegawa A."/>
            <person name="Hameed A."/>
            <person name="Lodhi M."/>
            <person name="Johnson A."/>
            <person name="Chen E."/>
            <person name="Marra M.A."/>
            <person name="Martienssen R."/>
            <person name="McCombie W.R."/>
        </authorList>
    </citation>
    <scope>NUCLEOTIDE SEQUENCE [LARGE SCALE GENOMIC DNA]</scope>
    <source>
        <strain>cv. Columbia</strain>
    </source>
</reference>
<reference key="2">
    <citation type="journal article" date="2017" name="Plant J.">
        <title>Araport11: a complete reannotation of the Arabidopsis thaliana reference genome.</title>
        <authorList>
            <person name="Cheng C.Y."/>
            <person name="Krishnakumar V."/>
            <person name="Chan A.P."/>
            <person name="Thibaud-Nissen F."/>
            <person name="Schobel S."/>
            <person name="Town C.D."/>
        </authorList>
    </citation>
    <scope>GENOME REANNOTATION</scope>
    <source>
        <strain>cv. Columbia</strain>
    </source>
</reference>
<reference key="3">
    <citation type="journal article" date="2001" name="Plant Physiol.">
        <title>A superfamily of proteins with novel cysteine-rich repeats.</title>
        <authorList>
            <person name="Chen Z."/>
        </authorList>
    </citation>
    <scope>GENE FAMILY ORGANIZATION</scope>
    <scope>NOMENCLATURE</scope>
</reference>
<gene>
    <name type="primary">CRK38</name>
    <name type="ordered locus">At4g04510</name>
    <name type="ORF">T26N6.12</name>
</gene>
<feature type="signal peptide" evidence="2">
    <location>
        <begin position="1"/>
        <end position="25"/>
    </location>
</feature>
<feature type="chain" id="PRO_0000295085" description="Cysteine-rich receptor-like protein kinase 38">
    <location>
        <begin position="26"/>
        <end position="648"/>
    </location>
</feature>
<feature type="topological domain" description="Extracellular" evidence="2">
    <location>
        <begin position="26"/>
        <end position="278"/>
    </location>
</feature>
<feature type="transmembrane region" description="Helical" evidence="2">
    <location>
        <begin position="279"/>
        <end position="299"/>
    </location>
</feature>
<feature type="topological domain" description="Cytoplasmic" evidence="2">
    <location>
        <begin position="300"/>
        <end position="648"/>
    </location>
</feature>
<feature type="domain" description="Gnk2-homologous 1" evidence="4">
    <location>
        <begin position="26"/>
        <end position="127"/>
    </location>
</feature>
<feature type="domain" description="Gnk2-homologous 2" evidence="4">
    <location>
        <begin position="140"/>
        <end position="247"/>
    </location>
</feature>
<feature type="domain" description="Protein kinase" evidence="3">
    <location>
        <begin position="339"/>
        <end position="611"/>
    </location>
</feature>
<feature type="active site" description="Proton acceptor" evidence="3 5">
    <location>
        <position position="464"/>
    </location>
</feature>
<feature type="binding site" evidence="3">
    <location>
        <begin position="345"/>
        <end position="353"/>
    </location>
    <ligand>
        <name>ATP</name>
        <dbReference type="ChEBI" id="CHEBI:30616"/>
    </ligand>
</feature>
<feature type="binding site" evidence="3">
    <location>
        <position position="367"/>
    </location>
    <ligand>
        <name>ATP</name>
        <dbReference type="ChEBI" id="CHEBI:30616"/>
    </ligand>
</feature>
<feature type="modified residue" description="Phosphotyrosine" evidence="1">
    <location>
        <position position="412"/>
    </location>
</feature>
<feature type="modified residue" description="Phosphoserine" evidence="1">
    <location>
        <position position="468"/>
    </location>
</feature>
<feature type="modified residue" description="Phosphothreonine" evidence="1">
    <location>
        <position position="504"/>
    </location>
</feature>
<feature type="modified residue" description="Phosphotyrosine" evidence="1">
    <location>
        <position position="512"/>
    </location>
</feature>
<feature type="glycosylation site" description="N-linked (GlcNAc...) asparagine" evidence="2">
    <location>
        <position position="37"/>
    </location>
</feature>
<feature type="glycosylation site" description="N-linked (GlcNAc...) asparagine" evidence="2">
    <location>
        <position position="63"/>
    </location>
</feature>
<feature type="glycosylation site" description="N-linked (GlcNAc...) asparagine" evidence="2">
    <location>
        <position position="151"/>
    </location>
</feature>
<feature type="glycosylation site" description="N-linked (GlcNAc...) asparagine" evidence="2">
    <location>
        <position position="174"/>
    </location>
</feature>
<feature type="glycosylation site" description="N-linked (GlcNAc...) asparagine" evidence="2">
    <location>
        <position position="253"/>
    </location>
</feature>
<dbReference type="EC" id="2.7.11.-"/>
<dbReference type="EMBL" id="AF076243">
    <property type="protein sequence ID" value="AAD29763.1"/>
    <property type="molecule type" value="Genomic_DNA"/>
</dbReference>
<dbReference type="EMBL" id="AL161500">
    <property type="protein sequence ID" value="CAB77919.1"/>
    <property type="molecule type" value="Genomic_DNA"/>
</dbReference>
<dbReference type="EMBL" id="CP002687">
    <property type="protein sequence ID" value="AEE82396.1"/>
    <property type="molecule type" value="Genomic_DNA"/>
</dbReference>
<dbReference type="PIR" id="H85056">
    <property type="entry name" value="H85056"/>
</dbReference>
<dbReference type="RefSeq" id="NP_192360.1">
    <property type="nucleotide sequence ID" value="NM_116689.2"/>
</dbReference>
<dbReference type="SMR" id="Q9XEC8"/>
<dbReference type="BioGRID" id="11092">
    <property type="interactions" value="3"/>
</dbReference>
<dbReference type="FunCoup" id="Q9XEC8">
    <property type="interactions" value="58"/>
</dbReference>
<dbReference type="IntAct" id="Q9XEC8">
    <property type="interactions" value="3"/>
</dbReference>
<dbReference type="STRING" id="3702.Q9XEC8"/>
<dbReference type="GlyCosmos" id="Q9XEC8">
    <property type="glycosylation" value="5 sites, No reported glycans"/>
</dbReference>
<dbReference type="GlyGen" id="Q9XEC8">
    <property type="glycosylation" value="5 sites"/>
</dbReference>
<dbReference type="iPTMnet" id="Q9XEC8"/>
<dbReference type="PaxDb" id="3702-AT4G04510.1"/>
<dbReference type="ProteomicsDB" id="220344"/>
<dbReference type="EnsemblPlants" id="AT4G04510.1">
    <property type="protein sequence ID" value="AT4G04510.1"/>
    <property type="gene ID" value="AT4G04510"/>
</dbReference>
<dbReference type="GeneID" id="825781"/>
<dbReference type="Gramene" id="AT4G04510.1">
    <property type="protein sequence ID" value="AT4G04510.1"/>
    <property type="gene ID" value="AT4G04510"/>
</dbReference>
<dbReference type="KEGG" id="ath:AT4G04510"/>
<dbReference type="Araport" id="AT4G04510"/>
<dbReference type="TAIR" id="AT4G04510">
    <property type="gene designation" value="CRK38"/>
</dbReference>
<dbReference type="eggNOG" id="ENOG502SE86">
    <property type="taxonomic scope" value="Eukaryota"/>
</dbReference>
<dbReference type="HOGENOM" id="CLU_000288_35_5_1"/>
<dbReference type="InParanoid" id="Q9XEC8"/>
<dbReference type="OMA" id="LCRRDYE"/>
<dbReference type="PhylomeDB" id="Q9XEC8"/>
<dbReference type="PRO" id="PR:Q9XEC8"/>
<dbReference type="Proteomes" id="UP000006548">
    <property type="component" value="Chromosome 4"/>
</dbReference>
<dbReference type="ExpressionAtlas" id="Q9XEC8">
    <property type="expression patterns" value="baseline and differential"/>
</dbReference>
<dbReference type="GO" id="GO:0016020">
    <property type="term" value="C:membrane"/>
    <property type="evidence" value="ECO:0007669"/>
    <property type="project" value="UniProtKB-SubCell"/>
</dbReference>
<dbReference type="GO" id="GO:0005524">
    <property type="term" value="F:ATP binding"/>
    <property type="evidence" value="ECO:0007669"/>
    <property type="project" value="UniProtKB-KW"/>
</dbReference>
<dbReference type="GO" id="GO:0106310">
    <property type="term" value="F:protein serine kinase activity"/>
    <property type="evidence" value="ECO:0007669"/>
    <property type="project" value="RHEA"/>
</dbReference>
<dbReference type="GO" id="GO:0004674">
    <property type="term" value="F:protein serine/threonine kinase activity"/>
    <property type="evidence" value="ECO:0007669"/>
    <property type="project" value="UniProtKB-KW"/>
</dbReference>
<dbReference type="CDD" id="cd23509">
    <property type="entry name" value="Gnk2-like"/>
    <property type="match status" value="2"/>
</dbReference>
<dbReference type="CDD" id="cd14066">
    <property type="entry name" value="STKc_IRAK"/>
    <property type="match status" value="1"/>
</dbReference>
<dbReference type="FunFam" id="3.30.200.20:FF:000142">
    <property type="entry name" value="Cysteine-rich receptor-like protein kinase 10"/>
    <property type="match status" value="1"/>
</dbReference>
<dbReference type="FunFam" id="3.30.430.20:FF:000007">
    <property type="entry name" value="Cysteine-rich receptor-like protein kinase 11"/>
    <property type="match status" value="1"/>
</dbReference>
<dbReference type="FunFam" id="1.10.510.10:FF:000343">
    <property type="entry name" value="Cysteine-rich receptor-like protein kinase 28"/>
    <property type="match status" value="1"/>
</dbReference>
<dbReference type="Gene3D" id="3.30.430.20">
    <property type="entry name" value="Gnk2 domain, C-X8-C-X2-C motif"/>
    <property type="match status" value="2"/>
</dbReference>
<dbReference type="Gene3D" id="3.30.200.20">
    <property type="entry name" value="Phosphorylase Kinase, domain 1"/>
    <property type="match status" value="1"/>
</dbReference>
<dbReference type="Gene3D" id="1.10.510.10">
    <property type="entry name" value="Transferase(Phosphotransferase) domain 1"/>
    <property type="match status" value="1"/>
</dbReference>
<dbReference type="InterPro" id="IPR002902">
    <property type="entry name" value="GNK2"/>
</dbReference>
<dbReference type="InterPro" id="IPR038408">
    <property type="entry name" value="GNK2_sf"/>
</dbReference>
<dbReference type="InterPro" id="IPR011009">
    <property type="entry name" value="Kinase-like_dom_sf"/>
</dbReference>
<dbReference type="InterPro" id="IPR000719">
    <property type="entry name" value="Prot_kinase_dom"/>
</dbReference>
<dbReference type="InterPro" id="IPR017441">
    <property type="entry name" value="Protein_kinase_ATP_BS"/>
</dbReference>
<dbReference type="InterPro" id="IPR008271">
    <property type="entry name" value="Ser/Thr_kinase_AS"/>
</dbReference>
<dbReference type="PANTHER" id="PTHR27002:SF698">
    <property type="entry name" value="CYSTEINE-RICH RECEPTOR-LIKE PROTEIN KINASE 38"/>
    <property type="match status" value="1"/>
</dbReference>
<dbReference type="PANTHER" id="PTHR27002">
    <property type="entry name" value="RECEPTOR-LIKE SERINE/THREONINE-PROTEIN KINASE SD1-8"/>
    <property type="match status" value="1"/>
</dbReference>
<dbReference type="Pfam" id="PF00069">
    <property type="entry name" value="Pkinase"/>
    <property type="match status" value="1"/>
</dbReference>
<dbReference type="Pfam" id="PF01657">
    <property type="entry name" value="Stress-antifung"/>
    <property type="match status" value="2"/>
</dbReference>
<dbReference type="SMART" id="SM00220">
    <property type="entry name" value="S_TKc"/>
    <property type="match status" value="1"/>
</dbReference>
<dbReference type="SUPFAM" id="SSF56112">
    <property type="entry name" value="Protein kinase-like (PK-like)"/>
    <property type="match status" value="1"/>
</dbReference>
<dbReference type="PROSITE" id="PS51473">
    <property type="entry name" value="GNK2"/>
    <property type="match status" value="2"/>
</dbReference>
<dbReference type="PROSITE" id="PS00107">
    <property type="entry name" value="PROTEIN_KINASE_ATP"/>
    <property type="match status" value="1"/>
</dbReference>
<dbReference type="PROSITE" id="PS50011">
    <property type="entry name" value="PROTEIN_KINASE_DOM"/>
    <property type="match status" value="1"/>
</dbReference>
<dbReference type="PROSITE" id="PS00108">
    <property type="entry name" value="PROTEIN_KINASE_ST"/>
    <property type="match status" value="1"/>
</dbReference>
<evidence type="ECO:0000250" key="1">
    <source>
        <dbReference type="UniProtKB" id="O48814"/>
    </source>
</evidence>
<evidence type="ECO:0000255" key="2"/>
<evidence type="ECO:0000255" key="3">
    <source>
        <dbReference type="PROSITE-ProRule" id="PRU00159"/>
    </source>
</evidence>
<evidence type="ECO:0000255" key="4">
    <source>
        <dbReference type="PROSITE-ProRule" id="PRU00806"/>
    </source>
</evidence>
<evidence type="ECO:0000255" key="5">
    <source>
        <dbReference type="PROSITE-ProRule" id="PRU10027"/>
    </source>
</evidence>
<evidence type="ECO:0000305" key="6"/>
<name>CRK38_ARATH</name>
<proteinExistence type="inferred from homology"/>
<sequence length="648" mass="72920">MKNSAAIFLTSSLILLLQTLHGVKAGFICVGSSFPTNSSYQKNRDSLFSTLSDKVTTNGGFYNASLDGVHVVGLCRRDYDRQGCINCVEESIRQIKTSCSNRVQSFHCNSDDRERVSCLVRTTDQSTYRILELGPATNDPSPVAIDTFAKNMTLFRQEWEAMVDRTLEAVTIDNSTTVLKYYGALKSEFSEFPNVYMMMQCTPDINSGACKRCLQASVTYFRDQNWGRQGGGICRPSCVFRWEFYPFYGAFANVTRVPAPPRALIPRTEAISITRLKGGIIAIFVVPIVINLLVFIGLIRAYTRIRKSYNGINEAQYDYGGQSKLRFDFRMILTATDDFSFENKIGQGGFGSVYKGKLPGGEEIAVKRLTRGSGQGEIEFRNEVLLLTRLQHRNLVKLLGFCNEGDEEILVYEFVPNSSLDHFIFDEEKRLLLTWDMRARIIEGVARGLVYLHEDSQLRIIHRDLKASNILLDAYMNPKVADFGMARLFNMDQTRAVTRKVVGTFGYMAPEYVRNRTFSVKTDVYSFGVVLLEMITGRSNKNYFEALGLPAYAWKCWVAGEAASIIDHVLSRSRSNEIMRFIHIGLLCVQENVSKRPTMSLVIQWLGSETIAIPLPTVAGFTNASYQAEHEAGTLSLNELSITELSPR</sequence>
<comment type="catalytic activity">
    <reaction>
        <text>L-seryl-[protein] + ATP = O-phospho-L-seryl-[protein] + ADP + H(+)</text>
        <dbReference type="Rhea" id="RHEA:17989"/>
        <dbReference type="Rhea" id="RHEA-COMP:9863"/>
        <dbReference type="Rhea" id="RHEA-COMP:11604"/>
        <dbReference type="ChEBI" id="CHEBI:15378"/>
        <dbReference type="ChEBI" id="CHEBI:29999"/>
        <dbReference type="ChEBI" id="CHEBI:30616"/>
        <dbReference type="ChEBI" id="CHEBI:83421"/>
        <dbReference type="ChEBI" id="CHEBI:456216"/>
    </reaction>
</comment>
<comment type="catalytic activity">
    <reaction>
        <text>L-threonyl-[protein] + ATP = O-phospho-L-threonyl-[protein] + ADP + H(+)</text>
        <dbReference type="Rhea" id="RHEA:46608"/>
        <dbReference type="Rhea" id="RHEA-COMP:11060"/>
        <dbReference type="Rhea" id="RHEA-COMP:11605"/>
        <dbReference type="ChEBI" id="CHEBI:15378"/>
        <dbReference type="ChEBI" id="CHEBI:30013"/>
        <dbReference type="ChEBI" id="CHEBI:30616"/>
        <dbReference type="ChEBI" id="CHEBI:61977"/>
        <dbReference type="ChEBI" id="CHEBI:456216"/>
    </reaction>
</comment>
<comment type="subcellular location">
    <subcellularLocation>
        <location evidence="6">Membrane</location>
        <topology evidence="6">Single-pass membrane protein</topology>
    </subcellularLocation>
</comment>
<comment type="similarity">
    <text evidence="3">Belongs to the protein kinase superfamily. Ser/Thr protein kinase family. CRK subfamily.</text>
</comment>
<organism>
    <name type="scientific">Arabidopsis thaliana</name>
    <name type="common">Mouse-ear cress</name>
    <dbReference type="NCBI Taxonomy" id="3702"/>
    <lineage>
        <taxon>Eukaryota</taxon>
        <taxon>Viridiplantae</taxon>
        <taxon>Streptophyta</taxon>
        <taxon>Embryophyta</taxon>
        <taxon>Tracheophyta</taxon>
        <taxon>Spermatophyta</taxon>
        <taxon>Magnoliopsida</taxon>
        <taxon>eudicotyledons</taxon>
        <taxon>Gunneridae</taxon>
        <taxon>Pentapetalae</taxon>
        <taxon>rosids</taxon>
        <taxon>malvids</taxon>
        <taxon>Brassicales</taxon>
        <taxon>Brassicaceae</taxon>
        <taxon>Camelineae</taxon>
        <taxon>Arabidopsis</taxon>
    </lineage>
</organism>
<accession>Q9XEC8</accession>
<keyword id="KW-0067">ATP-binding</keyword>
<keyword id="KW-0325">Glycoprotein</keyword>
<keyword id="KW-0418">Kinase</keyword>
<keyword id="KW-0472">Membrane</keyword>
<keyword id="KW-0547">Nucleotide-binding</keyword>
<keyword id="KW-0597">Phosphoprotein</keyword>
<keyword id="KW-0675">Receptor</keyword>
<keyword id="KW-1185">Reference proteome</keyword>
<keyword id="KW-0677">Repeat</keyword>
<keyword id="KW-0723">Serine/threonine-protein kinase</keyword>
<keyword id="KW-0732">Signal</keyword>
<keyword id="KW-0808">Transferase</keyword>
<keyword id="KW-0812">Transmembrane</keyword>
<keyword id="KW-1133">Transmembrane helix</keyword>